<sequence>MSRPQVELLTRAGCAICVRVAEQLAELSSELGFDMMTIDVDVAASTGNPGLRAEFGDRLPVVLLDGREHSYWEVDEHRLRADIARSTFGSPPDKRLP</sequence>
<protein>
    <recommendedName>
        <fullName>Uncharacterized protein Rv0508</fullName>
    </recommendedName>
</protein>
<name>Y508_MYCTU</name>
<accession>P9WKS9</accession>
<accession>L0T3U5</accession>
<accession>P64727</accession>
<accession>Q11172</accession>
<organism>
    <name type="scientific">Mycobacterium tuberculosis (strain ATCC 25618 / H37Rv)</name>
    <dbReference type="NCBI Taxonomy" id="83332"/>
    <lineage>
        <taxon>Bacteria</taxon>
        <taxon>Bacillati</taxon>
        <taxon>Actinomycetota</taxon>
        <taxon>Actinomycetes</taxon>
        <taxon>Mycobacteriales</taxon>
        <taxon>Mycobacteriaceae</taxon>
        <taxon>Mycobacterium</taxon>
        <taxon>Mycobacterium tuberculosis complex</taxon>
    </lineage>
</organism>
<feature type="chain" id="PRO_0000103712" description="Uncharacterized protein Rv0508">
    <location>
        <begin position="1"/>
        <end position="97"/>
    </location>
</feature>
<gene>
    <name type="ordered locus">Rv0508</name>
    <name type="ORF">MTCY20G9.35</name>
</gene>
<reference key="1">
    <citation type="journal article" date="1998" name="Nature">
        <title>Deciphering the biology of Mycobacterium tuberculosis from the complete genome sequence.</title>
        <authorList>
            <person name="Cole S.T."/>
            <person name="Brosch R."/>
            <person name="Parkhill J."/>
            <person name="Garnier T."/>
            <person name="Churcher C.M."/>
            <person name="Harris D.E."/>
            <person name="Gordon S.V."/>
            <person name="Eiglmeier K."/>
            <person name="Gas S."/>
            <person name="Barry C.E. III"/>
            <person name="Tekaia F."/>
            <person name="Badcock K."/>
            <person name="Basham D."/>
            <person name="Brown D."/>
            <person name="Chillingworth T."/>
            <person name="Connor R."/>
            <person name="Davies R.M."/>
            <person name="Devlin K."/>
            <person name="Feltwell T."/>
            <person name="Gentles S."/>
            <person name="Hamlin N."/>
            <person name="Holroyd S."/>
            <person name="Hornsby T."/>
            <person name="Jagels K."/>
            <person name="Krogh A."/>
            <person name="McLean J."/>
            <person name="Moule S."/>
            <person name="Murphy L.D."/>
            <person name="Oliver S."/>
            <person name="Osborne J."/>
            <person name="Quail M.A."/>
            <person name="Rajandream M.A."/>
            <person name="Rogers J."/>
            <person name="Rutter S."/>
            <person name="Seeger K."/>
            <person name="Skelton S."/>
            <person name="Squares S."/>
            <person name="Squares R."/>
            <person name="Sulston J.E."/>
            <person name="Taylor K."/>
            <person name="Whitehead S."/>
            <person name="Barrell B.G."/>
        </authorList>
    </citation>
    <scope>NUCLEOTIDE SEQUENCE [LARGE SCALE GENOMIC DNA]</scope>
    <source>
        <strain>ATCC 25618 / H37Rv</strain>
    </source>
</reference>
<reference key="2">
    <citation type="journal article" date="2011" name="Mol. Cell. Proteomics">
        <title>Proteogenomic analysis of Mycobacterium tuberculosis by high resolution mass spectrometry.</title>
        <authorList>
            <person name="Kelkar D.S."/>
            <person name="Kumar D."/>
            <person name="Kumar P."/>
            <person name="Balakrishnan L."/>
            <person name="Muthusamy B."/>
            <person name="Yadav A.K."/>
            <person name="Shrivastava P."/>
            <person name="Marimuthu A."/>
            <person name="Anand S."/>
            <person name="Sundaram H."/>
            <person name="Kingsbury R."/>
            <person name="Harsha H.C."/>
            <person name="Nair B."/>
            <person name="Prasad T.S."/>
            <person name="Chauhan D.S."/>
            <person name="Katoch K."/>
            <person name="Katoch V.M."/>
            <person name="Kumar P."/>
            <person name="Chaerkady R."/>
            <person name="Ramachandran S."/>
            <person name="Dash D."/>
            <person name="Pandey A."/>
        </authorList>
    </citation>
    <scope>IDENTIFICATION BY MASS SPECTROMETRY [LARGE SCALE ANALYSIS]</scope>
    <source>
        <strain>ATCC 25618 / H37Rv</strain>
    </source>
</reference>
<dbReference type="EMBL" id="AL123456">
    <property type="protein sequence ID" value="CCP43245.1"/>
    <property type="molecule type" value="Genomic_DNA"/>
</dbReference>
<dbReference type="PIR" id="G70746">
    <property type="entry name" value="G70746"/>
</dbReference>
<dbReference type="RefSeq" id="NP_215022.1">
    <property type="nucleotide sequence ID" value="NC_000962.3"/>
</dbReference>
<dbReference type="RefSeq" id="WP_003402695.1">
    <property type="nucleotide sequence ID" value="NZ_NVQJ01000002.1"/>
</dbReference>
<dbReference type="SMR" id="P9WKS9"/>
<dbReference type="STRING" id="83332.Rv0508"/>
<dbReference type="PaxDb" id="83332-Rv0508"/>
<dbReference type="GeneID" id="887301"/>
<dbReference type="KEGG" id="mtu:Rv0508"/>
<dbReference type="KEGG" id="mtv:RVBD_0508"/>
<dbReference type="TubercuList" id="Rv0508"/>
<dbReference type="eggNOG" id="COG0695">
    <property type="taxonomic scope" value="Bacteria"/>
</dbReference>
<dbReference type="InParanoid" id="P9WKS9"/>
<dbReference type="OrthoDB" id="8779161at2"/>
<dbReference type="PhylomeDB" id="P9WKS9"/>
<dbReference type="Proteomes" id="UP000001584">
    <property type="component" value="Chromosome"/>
</dbReference>
<dbReference type="GO" id="GO:0005886">
    <property type="term" value="C:plasma membrane"/>
    <property type="evidence" value="ECO:0007005"/>
    <property type="project" value="MTBBASE"/>
</dbReference>
<dbReference type="Gene3D" id="3.40.30.10">
    <property type="entry name" value="Glutaredoxin"/>
    <property type="match status" value="1"/>
</dbReference>
<dbReference type="InterPro" id="IPR008554">
    <property type="entry name" value="Glutaredoxin-like"/>
</dbReference>
<dbReference type="InterPro" id="IPR036249">
    <property type="entry name" value="Thioredoxin-like_sf"/>
</dbReference>
<dbReference type="Pfam" id="PF05768">
    <property type="entry name" value="Glrx-like"/>
    <property type="match status" value="1"/>
</dbReference>
<dbReference type="SUPFAM" id="SSF52833">
    <property type="entry name" value="Thioredoxin-like"/>
    <property type="match status" value="1"/>
</dbReference>
<keyword id="KW-1185">Reference proteome</keyword>
<proteinExistence type="evidence at protein level"/>